<keyword id="KW-0963">Cytoplasm</keyword>
<keyword id="KW-0648">Protein biosynthesis</keyword>
<keyword id="KW-0663">Pyridoxal phosphate</keyword>
<keyword id="KW-1185">Reference proteome</keyword>
<keyword id="KW-0711">Selenium</keyword>
<keyword id="KW-0808">Transferase</keyword>
<feature type="chain" id="PRO_0000189618" description="L-seryl-tRNA(Sec) selenium transferase">
    <location>
        <begin position="1"/>
        <end position="463"/>
    </location>
</feature>
<feature type="modified residue" description="N6-(pyridoxal phosphate)lysine" evidence="1">
    <location>
        <position position="295"/>
    </location>
</feature>
<evidence type="ECO:0000255" key="1">
    <source>
        <dbReference type="HAMAP-Rule" id="MF_00423"/>
    </source>
</evidence>
<gene>
    <name evidence="1" type="primary">selA</name>
    <name type="ordered locus">SF3629</name>
    <name type="ordered locus">S4139</name>
</gene>
<comment type="function">
    <text evidence="1">Converts seryl-tRNA(Sec) to selenocysteinyl-tRNA(Sec) required for selenoprotein biosynthesis.</text>
</comment>
<comment type="catalytic activity">
    <reaction evidence="1">
        <text>L-seryl-tRNA(Sec) + selenophosphate + H(+) = L-selenocysteinyl-tRNA(Sec) + phosphate</text>
        <dbReference type="Rhea" id="RHEA:22728"/>
        <dbReference type="Rhea" id="RHEA-COMP:9742"/>
        <dbReference type="Rhea" id="RHEA-COMP:9743"/>
        <dbReference type="ChEBI" id="CHEBI:15378"/>
        <dbReference type="ChEBI" id="CHEBI:16144"/>
        <dbReference type="ChEBI" id="CHEBI:43474"/>
        <dbReference type="ChEBI" id="CHEBI:78533"/>
        <dbReference type="ChEBI" id="CHEBI:78573"/>
        <dbReference type="EC" id="2.9.1.1"/>
    </reaction>
</comment>
<comment type="cofactor">
    <cofactor evidence="1">
        <name>pyridoxal 5'-phosphate</name>
        <dbReference type="ChEBI" id="CHEBI:597326"/>
    </cofactor>
</comment>
<comment type="pathway">
    <text evidence="1">Aminoacyl-tRNA biosynthesis; selenocysteinyl-tRNA(Sec) biosynthesis; selenocysteinyl-tRNA(Sec) from L-seryl-tRNA(Sec) (bacterial route): step 1/1.</text>
</comment>
<comment type="subunit">
    <text evidence="1">Homodecamer; pentamer of dimers. Binds only one seryl-tRNA(Sec) per dimer.</text>
</comment>
<comment type="subcellular location">
    <subcellularLocation>
        <location evidence="1">Cytoplasm</location>
    </subcellularLocation>
</comment>
<comment type="similarity">
    <text evidence="1">Belongs to the SelA family.</text>
</comment>
<protein>
    <recommendedName>
        <fullName evidence="1">L-seryl-tRNA(Sec) selenium transferase</fullName>
        <ecNumber evidence="1">2.9.1.1</ecNumber>
    </recommendedName>
    <alternativeName>
        <fullName evidence="1">Selenocysteine synthase</fullName>
        <shortName evidence="1">Sec synthase</shortName>
    </alternativeName>
    <alternativeName>
        <fullName evidence="1">Selenocysteinyl-tRNA(Sec) synthase</fullName>
    </alternativeName>
</protein>
<name>SELA_SHIFL</name>
<accession>Q83J28</accession>
<dbReference type="EC" id="2.9.1.1" evidence="1"/>
<dbReference type="EMBL" id="AE005674">
    <property type="protein sequence ID" value="AAN45076.1"/>
    <property type="molecule type" value="Genomic_DNA"/>
</dbReference>
<dbReference type="EMBL" id="AE014073">
    <property type="protein sequence ID" value="AAP19113.1"/>
    <property type="molecule type" value="Genomic_DNA"/>
</dbReference>
<dbReference type="RefSeq" id="NP_709369.1">
    <property type="nucleotide sequence ID" value="NC_004337.2"/>
</dbReference>
<dbReference type="RefSeq" id="WP_000206276.1">
    <property type="nucleotide sequence ID" value="NZ_WPGW01000093.1"/>
</dbReference>
<dbReference type="SMR" id="Q83J28"/>
<dbReference type="STRING" id="198214.SF3629"/>
<dbReference type="PaxDb" id="198214-SF3629"/>
<dbReference type="GeneID" id="1026305"/>
<dbReference type="KEGG" id="sfl:SF3629"/>
<dbReference type="KEGG" id="sfx:S4139"/>
<dbReference type="PATRIC" id="fig|198214.7.peg.4286"/>
<dbReference type="HOGENOM" id="CLU_038142_1_0_6"/>
<dbReference type="UniPathway" id="UPA00906">
    <property type="reaction ID" value="UER00896"/>
</dbReference>
<dbReference type="Proteomes" id="UP000001006">
    <property type="component" value="Chromosome"/>
</dbReference>
<dbReference type="Proteomes" id="UP000002673">
    <property type="component" value="Chromosome"/>
</dbReference>
<dbReference type="GO" id="GO:0005737">
    <property type="term" value="C:cytoplasm"/>
    <property type="evidence" value="ECO:0007669"/>
    <property type="project" value="UniProtKB-SubCell"/>
</dbReference>
<dbReference type="GO" id="GO:0004125">
    <property type="term" value="F:L-seryl-tRNA(Sec) selenium transferase activity"/>
    <property type="evidence" value="ECO:0007669"/>
    <property type="project" value="UniProtKB-UniRule"/>
</dbReference>
<dbReference type="GO" id="GO:0001717">
    <property type="term" value="P:conversion of seryl-tRNAsec to selenocys-tRNAsec"/>
    <property type="evidence" value="ECO:0007669"/>
    <property type="project" value="UniProtKB-UniRule"/>
</dbReference>
<dbReference type="GO" id="GO:0001514">
    <property type="term" value="P:selenocysteine incorporation"/>
    <property type="evidence" value="ECO:0007669"/>
    <property type="project" value="UniProtKB-UniRule"/>
</dbReference>
<dbReference type="FunFam" id="3.40.640.10:FF:000028">
    <property type="entry name" value="L-seryl-tRNA(Sec) selenium transferase"/>
    <property type="match status" value="1"/>
</dbReference>
<dbReference type="FunFam" id="3.90.1150.180:FF:000001">
    <property type="entry name" value="L-seryl-tRNA(Sec) selenium transferase"/>
    <property type="match status" value="1"/>
</dbReference>
<dbReference type="Gene3D" id="3.90.1150.180">
    <property type="match status" value="1"/>
</dbReference>
<dbReference type="Gene3D" id="3.40.640.10">
    <property type="entry name" value="Type I PLP-dependent aspartate aminotransferase-like (Major domain)"/>
    <property type="match status" value="1"/>
</dbReference>
<dbReference type="HAMAP" id="MF_00423">
    <property type="entry name" value="SelA"/>
    <property type="match status" value="1"/>
</dbReference>
<dbReference type="InterPro" id="IPR015424">
    <property type="entry name" value="PyrdxlP-dep_Trfase"/>
</dbReference>
<dbReference type="InterPro" id="IPR015421">
    <property type="entry name" value="PyrdxlP-dep_Trfase_major"/>
</dbReference>
<dbReference type="InterPro" id="IPR018319">
    <property type="entry name" value="SelA-like"/>
</dbReference>
<dbReference type="InterPro" id="IPR004534">
    <property type="entry name" value="SelA_trans"/>
</dbReference>
<dbReference type="InterPro" id="IPR025862">
    <property type="entry name" value="SelA_trans_N_dom"/>
</dbReference>
<dbReference type="NCBIfam" id="TIGR00474">
    <property type="entry name" value="selA"/>
    <property type="match status" value="1"/>
</dbReference>
<dbReference type="PANTHER" id="PTHR32328">
    <property type="entry name" value="L-SERYL-TRNA(SEC) SELENIUM TRANSFERASE"/>
    <property type="match status" value="1"/>
</dbReference>
<dbReference type="PANTHER" id="PTHR32328:SF0">
    <property type="entry name" value="L-SERYL-TRNA(SEC) SELENIUM TRANSFERASE"/>
    <property type="match status" value="1"/>
</dbReference>
<dbReference type="Pfam" id="PF12390">
    <property type="entry name" value="Se-cys_synth_N"/>
    <property type="match status" value="1"/>
</dbReference>
<dbReference type="Pfam" id="PF03841">
    <property type="entry name" value="SelA"/>
    <property type="match status" value="1"/>
</dbReference>
<dbReference type="SUPFAM" id="SSF53383">
    <property type="entry name" value="PLP-dependent transferases"/>
    <property type="match status" value="1"/>
</dbReference>
<reference key="1">
    <citation type="journal article" date="2002" name="Nucleic Acids Res.">
        <title>Genome sequence of Shigella flexneri 2a: insights into pathogenicity through comparison with genomes of Escherichia coli K12 and O157.</title>
        <authorList>
            <person name="Jin Q."/>
            <person name="Yuan Z."/>
            <person name="Xu J."/>
            <person name="Wang Y."/>
            <person name="Shen Y."/>
            <person name="Lu W."/>
            <person name="Wang J."/>
            <person name="Liu H."/>
            <person name="Yang J."/>
            <person name="Yang F."/>
            <person name="Zhang X."/>
            <person name="Zhang J."/>
            <person name="Yang G."/>
            <person name="Wu H."/>
            <person name="Qu D."/>
            <person name="Dong J."/>
            <person name="Sun L."/>
            <person name="Xue Y."/>
            <person name="Zhao A."/>
            <person name="Gao Y."/>
            <person name="Zhu J."/>
            <person name="Kan B."/>
            <person name="Ding K."/>
            <person name="Chen S."/>
            <person name="Cheng H."/>
            <person name="Yao Z."/>
            <person name="He B."/>
            <person name="Chen R."/>
            <person name="Ma D."/>
            <person name="Qiang B."/>
            <person name="Wen Y."/>
            <person name="Hou Y."/>
            <person name="Yu J."/>
        </authorList>
    </citation>
    <scope>NUCLEOTIDE SEQUENCE [LARGE SCALE GENOMIC DNA]</scope>
    <source>
        <strain>301 / Serotype 2a</strain>
    </source>
</reference>
<reference key="2">
    <citation type="journal article" date="2003" name="Infect. Immun.">
        <title>Complete genome sequence and comparative genomics of Shigella flexneri serotype 2a strain 2457T.</title>
        <authorList>
            <person name="Wei J."/>
            <person name="Goldberg M.B."/>
            <person name="Burland V."/>
            <person name="Venkatesan M.M."/>
            <person name="Deng W."/>
            <person name="Fournier G."/>
            <person name="Mayhew G.F."/>
            <person name="Plunkett G. III"/>
            <person name="Rose D.J."/>
            <person name="Darling A."/>
            <person name="Mau B."/>
            <person name="Perna N.T."/>
            <person name="Payne S.M."/>
            <person name="Runyen-Janecky L.J."/>
            <person name="Zhou S."/>
            <person name="Schwartz D.C."/>
            <person name="Blattner F.R."/>
        </authorList>
    </citation>
    <scope>NUCLEOTIDE SEQUENCE [LARGE SCALE GENOMIC DNA]</scope>
    <source>
        <strain>ATCC 700930 / 2457T / Serotype 2a</strain>
    </source>
</reference>
<organism>
    <name type="scientific">Shigella flexneri</name>
    <dbReference type="NCBI Taxonomy" id="623"/>
    <lineage>
        <taxon>Bacteria</taxon>
        <taxon>Pseudomonadati</taxon>
        <taxon>Pseudomonadota</taxon>
        <taxon>Gammaproteobacteria</taxon>
        <taxon>Enterobacterales</taxon>
        <taxon>Enterobacteriaceae</taxon>
        <taxon>Shigella</taxon>
    </lineage>
</organism>
<sequence length="463" mass="50635">MTTETRSLYSQLPAIDRLLRDSSFLSLRDTYGHTRVVELLRQMLDEAREVIRGSQTLPAWCENWAQEVDARLTKEAQSALRPVINLTGTVLHTNLGRALQAEAAVEAVAQAMRSPVTLEYDLDDAGRGHRDRALAQLLCRITGAEDACIVNNNAAAVLLMLAATASGKEVVVSRGELVEIGGAFRIPDVMRQAGCTLHEVGTTNRTHANDYRQAVNENTALLMKVHTSNYSIQGFTKAIDEAELVALGKELDVPVVTDLGSGSLVDLSQYGLPKEPMPQELIAAGVSLVSFSGDKLLGGPQAGIIVGKKEMIARLQSHPLKRALRADKMTLAALEATLRLYLHPEALSEKLPTLRLLTRSAEVIQIQAQRLQAPLVAHYGAEFAVQVMPCLSQIGSGSLPVDRLPSAALTFTPHDGRGSHLESLAARWRELPVPVIGRIYDGRLWLDLRCLEDEQRFLEMLLK</sequence>
<proteinExistence type="inferred from homology"/>